<name>TUSC_PASMU</name>
<comment type="function">
    <text evidence="1">Could be part of a sulfur-relay system.</text>
</comment>
<comment type="subcellular location">
    <subcellularLocation>
        <location evidence="1">Cytoplasm</location>
    </subcellularLocation>
</comment>
<comment type="similarity">
    <text evidence="2">Belongs to the DsrF/TusC family.</text>
</comment>
<evidence type="ECO:0000250" key="1"/>
<evidence type="ECO:0000305" key="2"/>
<accession>Q9CL88</accession>
<sequence>MKLAFVFRSTPFGRASTREGLDALLAATAFCDEQDIAVFFLDDGVFSLLNHQDPAQILQKDVVNMFKLLDLYDIEQRYICLESLATAKMTASDCIITCEKMARAALLTLLGKAERVLTF</sequence>
<organism>
    <name type="scientific">Pasteurella multocida (strain Pm70)</name>
    <dbReference type="NCBI Taxonomy" id="272843"/>
    <lineage>
        <taxon>Bacteria</taxon>
        <taxon>Pseudomonadati</taxon>
        <taxon>Pseudomonadota</taxon>
        <taxon>Gammaproteobacteria</taxon>
        <taxon>Pasteurellales</taxon>
        <taxon>Pasteurellaceae</taxon>
        <taxon>Pasteurella</taxon>
    </lineage>
</organism>
<protein>
    <recommendedName>
        <fullName>Protein TusC homolog</fullName>
    </recommendedName>
</protein>
<proteinExistence type="inferred from homology"/>
<dbReference type="EMBL" id="AE004439">
    <property type="protein sequence ID" value="AAK03436.1"/>
    <property type="molecule type" value="Genomic_DNA"/>
</dbReference>
<dbReference type="RefSeq" id="WP_005751978.1">
    <property type="nucleotide sequence ID" value="NC_002663.1"/>
</dbReference>
<dbReference type="SMR" id="Q9CL88"/>
<dbReference type="STRING" id="272843.PM1352"/>
<dbReference type="EnsemblBacteria" id="AAK03436">
    <property type="protein sequence ID" value="AAK03436"/>
    <property type="gene ID" value="PM1352"/>
</dbReference>
<dbReference type="KEGG" id="pmu:PM1352"/>
<dbReference type="PATRIC" id="fig|272843.6.peg.1364"/>
<dbReference type="HOGENOM" id="CLU_155943_1_0_6"/>
<dbReference type="OrthoDB" id="9789418at2"/>
<dbReference type="Proteomes" id="UP000000809">
    <property type="component" value="Chromosome"/>
</dbReference>
<dbReference type="GO" id="GO:0005737">
    <property type="term" value="C:cytoplasm"/>
    <property type="evidence" value="ECO:0007669"/>
    <property type="project" value="UniProtKB-SubCell"/>
</dbReference>
<dbReference type="Gene3D" id="3.40.1260.10">
    <property type="entry name" value="DsrEFH-like"/>
    <property type="match status" value="1"/>
</dbReference>
<dbReference type="InterPro" id="IPR027396">
    <property type="entry name" value="DsrEFH-like"/>
</dbReference>
<dbReference type="InterPro" id="IPR003787">
    <property type="entry name" value="Sulphur_relay_DsrE/F-like"/>
</dbReference>
<dbReference type="InterPro" id="IPR017462">
    <property type="entry name" value="Sulphur_relay_TusC/DsrF"/>
</dbReference>
<dbReference type="NCBIfam" id="NF001238">
    <property type="entry name" value="PRK00211.1"/>
    <property type="match status" value="1"/>
</dbReference>
<dbReference type="NCBIfam" id="TIGR03010">
    <property type="entry name" value="sulf_tusC_dsrF"/>
    <property type="match status" value="1"/>
</dbReference>
<dbReference type="PANTHER" id="PTHR38780">
    <property type="entry name" value="PROTEIN TUSC"/>
    <property type="match status" value="1"/>
</dbReference>
<dbReference type="PANTHER" id="PTHR38780:SF1">
    <property type="entry name" value="PROTEIN TUSC"/>
    <property type="match status" value="1"/>
</dbReference>
<dbReference type="Pfam" id="PF02635">
    <property type="entry name" value="DsrE"/>
    <property type="match status" value="1"/>
</dbReference>
<dbReference type="SUPFAM" id="SSF75169">
    <property type="entry name" value="DsrEFH-like"/>
    <property type="match status" value="1"/>
</dbReference>
<gene>
    <name type="primary">tusC</name>
    <name type="ordered locus">PM1352</name>
</gene>
<reference key="1">
    <citation type="journal article" date="2001" name="Proc. Natl. Acad. Sci. U.S.A.">
        <title>Complete genomic sequence of Pasteurella multocida Pm70.</title>
        <authorList>
            <person name="May B.J."/>
            <person name="Zhang Q."/>
            <person name="Li L.L."/>
            <person name="Paustian M.L."/>
            <person name="Whittam T.S."/>
            <person name="Kapur V."/>
        </authorList>
    </citation>
    <scope>NUCLEOTIDE SEQUENCE [LARGE SCALE GENOMIC DNA]</scope>
    <source>
        <strain>Pm70</strain>
    </source>
</reference>
<keyword id="KW-0963">Cytoplasm</keyword>
<keyword id="KW-1185">Reference proteome</keyword>
<feature type="chain" id="PRO_0000214887" description="Protein TusC homolog">
    <location>
        <begin position="1"/>
        <end position="119"/>
    </location>
</feature>